<evidence type="ECO:0000255" key="1">
    <source>
        <dbReference type="PROSITE-ProRule" id="PRU00238"/>
    </source>
</evidence>
<reference key="1">
    <citation type="journal article" date="1994" name="Biol. Chem. Hoppe-Seyler">
        <title>Amino acid sequence of the alpha(A)- and beta-polypeptide chains of the Ryukyu rufous turtle dove (Streptopelia orientalis Stimpsoni) hemoglobin.</title>
        <authorList>
            <person name="Eguchi Y."/>
            <person name="Takei H."/>
        </authorList>
    </citation>
    <scope>PROTEIN SEQUENCE</scope>
</reference>
<sequence>VLSASDKSNVKAAFGKIGGQAGDLGGQALERMFITYPQTKTYFPHFDLSHGSAQIKGHGKKVAEALVEAANHIDDIAGALSKLSDLHAQKLRVDPVNFKLLGHCFLVVVAAHFPSLLTPEVHASLDKFVLAVGTVLTAKYR</sequence>
<name>HBA_STROE</name>
<organism>
    <name type="scientific">Streptopelia orientalis</name>
    <name type="common">Eastern turtle dove</name>
    <dbReference type="NCBI Taxonomy" id="36243"/>
    <lineage>
        <taxon>Eukaryota</taxon>
        <taxon>Metazoa</taxon>
        <taxon>Chordata</taxon>
        <taxon>Craniata</taxon>
        <taxon>Vertebrata</taxon>
        <taxon>Euteleostomi</taxon>
        <taxon>Archelosauria</taxon>
        <taxon>Archosauria</taxon>
        <taxon>Dinosauria</taxon>
        <taxon>Saurischia</taxon>
        <taxon>Theropoda</taxon>
        <taxon>Coelurosauria</taxon>
        <taxon>Aves</taxon>
        <taxon>Neognathae</taxon>
        <taxon>Neoaves</taxon>
        <taxon>Columbimorphae</taxon>
        <taxon>Columbiformes</taxon>
        <taxon>Columbidae</taxon>
        <taxon>Streptopelia</taxon>
    </lineage>
</organism>
<proteinExistence type="evidence at protein level"/>
<feature type="chain" id="PRO_0000052770" description="Hemoglobin subunit alpha-A">
    <location>
        <begin position="1"/>
        <end position="141"/>
    </location>
</feature>
<feature type="domain" description="Globin" evidence="1">
    <location>
        <begin position="1"/>
        <end position="141"/>
    </location>
</feature>
<feature type="binding site" evidence="1">
    <location>
        <position position="58"/>
    </location>
    <ligand>
        <name>O2</name>
        <dbReference type="ChEBI" id="CHEBI:15379"/>
    </ligand>
</feature>
<feature type="binding site" description="proximal binding residue" evidence="1">
    <location>
        <position position="87"/>
    </location>
    <ligand>
        <name>heme b</name>
        <dbReference type="ChEBI" id="CHEBI:60344"/>
    </ligand>
    <ligandPart>
        <name>Fe</name>
        <dbReference type="ChEBI" id="CHEBI:18248"/>
    </ligandPart>
</feature>
<accession>Q7LZC3</accession>
<gene>
    <name type="primary">HBAA</name>
</gene>
<keyword id="KW-0903">Direct protein sequencing</keyword>
<keyword id="KW-0349">Heme</keyword>
<keyword id="KW-0408">Iron</keyword>
<keyword id="KW-0479">Metal-binding</keyword>
<keyword id="KW-0561">Oxygen transport</keyword>
<keyword id="KW-0813">Transport</keyword>
<protein>
    <recommendedName>
        <fullName>Hemoglobin subunit alpha-A</fullName>
    </recommendedName>
    <alternativeName>
        <fullName>Alpha-A-globin</fullName>
    </alternativeName>
    <alternativeName>
        <fullName>Hemoglobin alpha-A chain</fullName>
    </alternativeName>
</protein>
<comment type="function">
    <text>Involved in oxygen transport from the lung to the various peripheral tissues.</text>
</comment>
<comment type="subunit">
    <text>Heterotetramer of two alpha chains and two beta chains.</text>
</comment>
<comment type="tissue specificity">
    <text>Red blood cells.</text>
</comment>
<comment type="similarity">
    <text evidence="1">Belongs to the globin family.</text>
</comment>
<dbReference type="PIR" id="S55247">
    <property type="entry name" value="S55247"/>
</dbReference>
<dbReference type="SMR" id="Q7LZC3"/>
<dbReference type="GO" id="GO:0072562">
    <property type="term" value="C:blood microparticle"/>
    <property type="evidence" value="ECO:0007669"/>
    <property type="project" value="TreeGrafter"/>
</dbReference>
<dbReference type="GO" id="GO:0031838">
    <property type="term" value="C:haptoglobin-hemoglobin complex"/>
    <property type="evidence" value="ECO:0007669"/>
    <property type="project" value="TreeGrafter"/>
</dbReference>
<dbReference type="GO" id="GO:0005833">
    <property type="term" value="C:hemoglobin complex"/>
    <property type="evidence" value="ECO:0007669"/>
    <property type="project" value="InterPro"/>
</dbReference>
<dbReference type="GO" id="GO:0031720">
    <property type="term" value="F:haptoglobin binding"/>
    <property type="evidence" value="ECO:0007669"/>
    <property type="project" value="TreeGrafter"/>
</dbReference>
<dbReference type="GO" id="GO:0020037">
    <property type="term" value="F:heme binding"/>
    <property type="evidence" value="ECO:0007669"/>
    <property type="project" value="InterPro"/>
</dbReference>
<dbReference type="GO" id="GO:0005506">
    <property type="term" value="F:iron ion binding"/>
    <property type="evidence" value="ECO:0007669"/>
    <property type="project" value="InterPro"/>
</dbReference>
<dbReference type="GO" id="GO:0043177">
    <property type="term" value="F:organic acid binding"/>
    <property type="evidence" value="ECO:0007669"/>
    <property type="project" value="TreeGrafter"/>
</dbReference>
<dbReference type="GO" id="GO:0019825">
    <property type="term" value="F:oxygen binding"/>
    <property type="evidence" value="ECO:0007669"/>
    <property type="project" value="InterPro"/>
</dbReference>
<dbReference type="GO" id="GO:0005344">
    <property type="term" value="F:oxygen carrier activity"/>
    <property type="evidence" value="ECO:0007669"/>
    <property type="project" value="UniProtKB-KW"/>
</dbReference>
<dbReference type="GO" id="GO:0004601">
    <property type="term" value="F:peroxidase activity"/>
    <property type="evidence" value="ECO:0007669"/>
    <property type="project" value="TreeGrafter"/>
</dbReference>
<dbReference type="GO" id="GO:0042744">
    <property type="term" value="P:hydrogen peroxide catabolic process"/>
    <property type="evidence" value="ECO:0007669"/>
    <property type="project" value="TreeGrafter"/>
</dbReference>
<dbReference type="CDD" id="cd08927">
    <property type="entry name" value="Hb-alpha-like"/>
    <property type="match status" value="1"/>
</dbReference>
<dbReference type="FunFam" id="1.10.490.10:FF:000002">
    <property type="entry name" value="Hemoglobin subunit alpha"/>
    <property type="match status" value="1"/>
</dbReference>
<dbReference type="Gene3D" id="1.10.490.10">
    <property type="entry name" value="Globins"/>
    <property type="match status" value="1"/>
</dbReference>
<dbReference type="InterPro" id="IPR000971">
    <property type="entry name" value="Globin"/>
</dbReference>
<dbReference type="InterPro" id="IPR009050">
    <property type="entry name" value="Globin-like_sf"/>
</dbReference>
<dbReference type="InterPro" id="IPR012292">
    <property type="entry name" value="Globin/Proto"/>
</dbReference>
<dbReference type="InterPro" id="IPR002338">
    <property type="entry name" value="Hemoglobin_a-typ"/>
</dbReference>
<dbReference type="InterPro" id="IPR050056">
    <property type="entry name" value="Hemoglobin_oxygen_transport"/>
</dbReference>
<dbReference type="InterPro" id="IPR002339">
    <property type="entry name" value="Hemoglobin_pi"/>
</dbReference>
<dbReference type="PANTHER" id="PTHR11442">
    <property type="entry name" value="HEMOGLOBIN FAMILY MEMBER"/>
    <property type="match status" value="1"/>
</dbReference>
<dbReference type="PANTHER" id="PTHR11442:SF48">
    <property type="entry name" value="HEMOGLOBIN SUBUNIT ALPHA"/>
    <property type="match status" value="1"/>
</dbReference>
<dbReference type="Pfam" id="PF00042">
    <property type="entry name" value="Globin"/>
    <property type="match status" value="1"/>
</dbReference>
<dbReference type="PRINTS" id="PR00612">
    <property type="entry name" value="ALPHAHAEM"/>
</dbReference>
<dbReference type="PRINTS" id="PR00815">
    <property type="entry name" value="PIHAEM"/>
</dbReference>
<dbReference type="SUPFAM" id="SSF46458">
    <property type="entry name" value="Globin-like"/>
    <property type="match status" value="1"/>
</dbReference>
<dbReference type="PROSITE" id="PS01033">
    <property type="entry name" value="GLOBIN"/>
    <property type="match status" value="1"/>
</dbReference>